<protein>
    <recommendedName>
        <fullName evidence="3">Prohibitin-1</fullName>
    </recommendedName>
    <alternativeName>
        <fullName evidence="3">ChPHB1</fullName>
    </alternativeName>
</protein>
<keyword id="KW-0472">Membrane</keyword>
<keyword id="KW-0496">Mitochondrion</keyword>
<keyword id="KW-0999">Mitochondrion inner membrane</keyword>
<keyword id="KW-1185">Reference proteome</keyword>
<evidence type="ECO:0000250" key="1">
    <source>
        <dbReference type="UniProtKB" id="P40961"/>
    </source>
</evidence>
<evidence type="ECO:0000269" key="2">
    <source>
    </source>
</evidence>
<evidence type="ECO:0000303" key="3">
    <source>
    </source>
</evidence>
<evidence type="ECO:0000305" key="4"/>
<evidence type="ECO:0000305" key="5">
    <source>
    </source>
</evidence>
<evidence type="ECO:0000312" key="6">
    <source>
        <dbReference type="EMBL" id="CCF42234.1"/>
    </source>
</evidence>
<evidence type="ECO:0000312" key="7">
    <source>
        <dbReference type="EMBL" id="OBR07199.1"/>
    </source>
</evidence>
<evidence type="ECO:0000312" key="8">
    <source>
        <dbReference type="Proteomes" id="UP000007174"/>
    </source>
</evidence>
<evidence type="ECO:0000312" key="9">
    <source>
        <dbReference type="Proteomes" id="UP000092177"/>
    </source>
</evidence>
<feature type="chain" id="PRO_0000461184" description="Prohibitin-1">
    <location>
        <begin position="1"/>
        <end position="275"/>
    </location>
</feature>
<feature type="short sequence motif" description="AIM" evidence="1">
    <location>
        <begin position="106"/>
        <end position="109"/>
    </location>
</feature>
<dbReference type="EMBL" id="CACQ02005245">
    <property type="protein sequence ID" value="CCF42234.1"/>
    <property type="molecule type" value="Genomic_DNA"/>
</dbReference>
<dbReference type="EMBL" id="LTAN01000006">
    <property type="protein sequence ID" value="OBR07199.1"/>
    <property type="molecule type" value="Genomic_DNA"/>
</dbReference>
<dbReference type="RefSeq" id="XP_018155717.1">
    <property type="nucleotide sequence ID" value="XM_018303694.1"/>
</dbReference>
<dbReference type="SMR" id="H1VPS8"/>
<dbReference type="STRING" id="759273.H1VPS8"/>
<dbReference type="EnsemblFungi" id="CCF42234">
    <property type="protein sequence ID" value="CCF42234"/>
    <property type="gene ID" value="CH063_12292"/>
</dbReference>
<dbReference type="GeneID" id="28867801"/>
<dbReference type="KEGG" id="chig:CH63R_08720"/>
<dbReference type="VEuPathDB" id="FungiDB:CH63R_08720"/>
<dbReference type="eggNOG" id="KOG3083">
    <property type="taxonomic scope" value="Eukaryota"/>
</dbReference>
<dbReference type="HOGENOM" id="CLU_047969_0_2_1"/>
<dbReference type="OrthoDB" id="31017at1028384"/>
<dbReference type="PHI-base" id="PHI:123279"/>
<dbReference type="Proteomes" id="UP000007174">
    <property type="component" value="Unassembled WGS sequence"/>
</dbReference>
<dbReference type="Proteomes" id="UP000092177">
    <property type="component" value="Chromosome 6"/>
</dbReference>
<dbReference type="GO" id="GO:0035632">
    <property type="term" value="C:mitochondrial prohibitin complex"/>
    <property type="evidence" value="ECO:0000353"/>
    <property type="project" value="UniProtKB"/>
</dbReference>
<dbReference type="GO" id="GO:0005739">
    <property type="term" value="C:mitochondrion"/>
    <property type="evidence" value="ECO:0000314"/>
    <property type="project" value="UniProtKB"/>
</dbReference>
<dbReference type="GO" id="GO:0140580">
    <property type="term" value="F:mitochondrion autophagosome adaptor activity"/>
    <property type="evidence" value="ECO:0007669"/>
    <property type="project" value="EnsemblFungi"/>
</dbReference>
<dbReference type="GO" id="GO:0007007">
    <property type="term" value="P:inner mitochondrial membrane organization"/>
    <property type="evidence" value="ECO:0007669"/>
    <property type="project" value="EnsemblFungi"/>
</dbReference>
<dbReference type="GO" id="GO:0000001">
    <property type="term" value="P:mitochondrion inheritance"/>
    <property type="evidence" value="ECO:0007669"/>
    <property type="project" value="EnsemblFungi"/>
</dbReference>
<dbReference type="GO" id="GO:0000423">
    <property type="term" value="P:mitophagy"/>
    <property type="evidence" value="ECO:0000315"/>
    <property type="project" value="UniProtKB"/>
</dbReference>
<dbReference type="GO" id="GO:0045861">
    <property type="term" value="P:negative regulation of proteolysis"/>
    <property type="evidence" value="ECO:0007669"/>
    <property type="project" value="EnsemblFungi"/>
</dbReference>
<dbReference type="GO" id="GO:0006457">
    <property type="term" value="P:protein folding"/>
    <property type="evidence" value="ECO:0007669"/>
    <property type="project" value="EnsemblFungi"/>
</dbReference>
<dbReference type="CDD" id="cd03401">
    <property type="entry name" value="SPFH_prohibitin"/>
    <property type="match status" value="1"/>
</dbReference>
<dbReference type="FunFam" id="3.30.479.30:FF:000001">
    <property type="entry name" value="Prohibitin 2"/>
    <property type="match status" value="1"/>
</dbReference>
<dbReference type="Gene3D" id="3.30.479.30">
    <property type="entry name" value="Band 7 domain"/>
    <property type="match status" value="1"/>
</dbReference>
<dbReference type="InterPro" id="IPR001107">
    <property type="entry name" value="Band_7"/>
</dbReference>
<dbReference type="InterPro" id="IPR036013">
    <property type="entry name" value="Band_7/SPFH_dom_sf"/>
</dbReference>
<dbReference type="InterPro" id="IPR000163">
    <property type="entry name" value="Prohibitin"/>
</dbReference>
<dbReference type="PANTHER" id="PTHR23222">
    <property type="entry name" value="PROHIBITIN"/>
    <property type="match status" value="1"/>
</dbReference>
<dbReference type="PANTHER" id="PTHR23222:SF0">
    <property type="entry name" value="PROHIBITIN 1"/>
    <property type="match status" value="1"/>
</dbReference>
<dbReference type="Pfam" id="PF01145">
    <property type="entry name" value="Band_7"/>
    <property type="match status" value="1"/>
</dbReference>
<dbReference type="PRINTS" id="PR00679">
    <property type="entry name" value="PROHIBITIN"/>
</dbReference>
<dbReference type="SMART" id="SM00244">
    <property type="entry name" value="PHB"/>
    <property type="match status" value="1"/>
</dbReference>
<dbReference type="SUPFAM" id="SSF117892">
    <property type="entry name" value="Band 7/SPFH domain"/>
    <property type="match status" value="1"/>
</dbReference>
<accession>H1VPS8</accession>
<sequence>MAQALGFAYRMAVPAAIGVAVLQSSIYDVKGGSRAVIFDRLSGVKETVINEGTHFLVPWLQRSIVFDVRTKPRNIATTTGSKDLQMVSLTLRVLHRPEVQALPKIYQNLGQDYDERVLPSIGNEVLKSIVAQFDAAELITQREAVSQRISSDLRKRAAEFNIALEDVSITHMTFGKEFTKAVEQKQIAQQDAERARFIVEKAEQERQANVIRAEGEAESAETISKAIAKNGDGLVQIRKIEASRDIAATLAANPNVVYLPSGGKSGSQMLLNVGR</sequence>
<organism evidence="8">
    <name type="scientific">Colletotrichum higginsianum (strain IMI 349063)</name>
    <name type="common">Crucifer anthracnose fungus</name>
    <dbReference type="NCBI Taxonomy" id="759273"/>
    <lineage>
        <taxon>Eukaryota</taxon>
        <taxon>Fungi</taxon>
        <taxon>Dikarya</taxon>
        <taxon>Ascomycota</taxon>
        <taxon>Pezizomycotina</taxon>
        <taxon>Sordariomycetes</taxon>
        <taxon>Hypocreomycetidae</taxon>
        <taxon>Glomerellales</taxon>
        <taxon>Glomerellaceae</taxon>
        <taxon>Colletotrichum</taxon>
        <taxon>Colletotrichum destructivum species complex</taxon>
    </lineage>
</organism>
<gene>
    <name evidence="3" type="primary">PHB1</name>
    <name evidence="6" type="ORF">CH063_12292</name>
    <name evidence="7" type="ORF">CH63R_08720</name>
</gene>
<reference evidence="8" key="1">
    <citation type="journal article" date="2012" name="Nat. Genet.">
        <title>Lifestyle transitions in plant pathogenic Colletotrichum fungi deciphered by genome and transcriptome analyses.</title>
        <authorList>
            <person name="O'Connell R.J."/>
            <person name="Thon M.R."/>
            <person name="Hacquard S."/>
            <person name="Amyotte S.G."/>
            <person name="Kleemann J."/>
            <person name="Torres M.F."/>
            <person name="Damm U."/>
            <person name="Buiate E.A."/>
            <person name="Epstein L."/>
            <person name="Alkan N."/>
            <person name="Altmueller J."/>
            <person name="Alvarado-Balderrama L."/>
            <person name="Bauser C.A."/>
            <person name="Becker C."/>
            <person name="Birren B.W."/>
            <person name="Chen Z."/>
            <person name="Choi J."/>
            <person name="Crouch J.A."/>
            <person name="Duvick J.P."/>
            <person name="Farman M.A."/>
            <person name="Gan P."/>
            <person name="Heiman D."/>
            <person name="Henrissat B."/>
            <person name="Howard R.J."/>
            <person name="Kabbage M."/>
            <person name="Koch C."/>
            <person name="Kracher B."/>
            <person name="Kubo Y."/>
            <person name="Law A.D."/>
            <person name="Lebrun M.-H."/>
            <person name="Lee Y.-H."/>
            <person name="Miyara I."/>
            <person name="Moore N."/>
            <person name="Neumann U."/>
            <person name="Nordstroem K."/>
            <person name="Panaccione D.G."/>
            <person name="Panstruga R."/>
            <person name="Place M."/>
            <person name="Proctor R.H."/>
            <person name="Prusky D."/>
            <person name="Rech G."/>
            <person name="Reinhardt R."/>
            <person name="Rollins J.A."/>
            <person name="Rounsley S."/>
            <person name="Schardl C.L."/>
            <person name="Schwartz D.C."/>
            <person name="Shenoy N."/>
            <person name="Shirasu K."/>
            <person name="Sikhakolli U.R."/>
            <person name="Stueber K."/>
            <person name="Sukno S.A."/>
            <person name="Sweigard J.A."/>
            <person name="Takano Y."/>
            <person name="Takahara H."/>
            <person name="Trail F."/>
            <person name="van der Does H.C."/>
            <person name="Voll L.M."/>
            <person name="Will I."/>
            <person name="Young S."/>
            <person name="Zeng Q."/>
            <person name="Zhang J."/>
            <person name="Zhou S."/>
            <person name="Dickman M.B."/>
            <person name="Schulze-Lefert P."/>
            <person name="Ver Loren van Themaat E."/>
            <person name="Ma L.-J."/>
            <person name="Vaillancourt L.J."/>
        </authorList>
    </citation>
    <scope>NUCLEOTIDE SEQUENCE [LARGE SCALE GENOMIC DNA]</scope>
    <source>
        <strain evidence="8">IMI 349063</strain>
    </source>
</reference>
<reference evidence="9" key="2">
    <citation type="journal article" date="2017" name="BMC Genomics">
        <title>Gapless genome assembly of Colletotrichum higginsianum reveals chromosome structure and association of transposable elements with secondary metabolite gene clusters.</title>
        <authorList>
            <person name="Dallery J.-F."/>
            <person name="Lapalu N."/>
            <person name="Zampounis A."/>
            <person name="Pigne S."/>
            <person name="Luyten I."/>
            <person name="Amselem J."/>
            <person name="Wittenberg A.H.J."/>
            <person name="Zhou S."/>
            <person name="de Queiroz M.V."/>
            <person name="Robin G.P."/>
            <person name="Auger A."/>
            <person name="Hainaut M."/>
            <person name="Henrissat B."/>
            <person name="Kim K.-T."/>
            <person name="Lee Y.-H."/>
            <person name="Lespinet O."/>
            <person name="Schwartz D.C."/>
            <person name="Thon M.R."/>
            <person name="O'Connell R.J."/>
        </authorList>
    </citation>
    <scope>NUCLEOTIDE SEQUENCE [LARGE SCALE GENOMIC DNA]</scope>
    <source>
        <strain evidence="9">IMI 349063</strain>
    </source>
</reference>
<reference evidence="4" key="3">
    <citation type="journal article" date="2022" name="Commun. Biol.">
        <title>Mitochondrial prohibitin complex regulates fungal virulence via ATG24-assisted mitophagy.</title>
        <authorList>
            <person name="Yan Y."/>
            <person name="Tang J."/>
            <person name="Yuan Q."/>
            <person name="Liu C."/>
            <person name="Chen X."/>
            <person name="Liu H."/>
            <person name="Huang J."/>
            <person name="Bao C."/>
            <person name="Hsiang T."/>
            <person name="Zheng L."/>
        </authorList>
    </citation>
    <scope>FUNCTION</scope>
    <scope>IDENTIFICATION IN THE PROHIBITIN COMPLEX</scope>
    <scope>INTERACTION WITH ATG24</scope>
    <scope>SUBCELLULAR LOCATION</scope>
    <scope>INDUCTION</scope>
    <scope>DISRUPTION PHENOTYPE</scope>
</reference>
<proteinExistence type="evidence at protein level"/>
<name>PHB1_COLHI</name>
<comment type="function">
    <text evidence="1 2">Prohibitin probably acts as a holdase/unfoldase for the stabilization of newly synthesized mitochondrial proteins (By similarity). Involved in mitophagy (PubMed:35835849). Required for the switch to necrotrophic growth (PubMed:35835849).</text>
</comment>
<comment type="subunit">
    <text evidence="1 2">The mitochondrial prohibitin complex consists of two subunits (PHB1 and PHB2) (PubMed:35835849). The subunits assemble into a membrane-associated ring-shaped supercomplex of approximately 1 mDa (By similarity). Interacts with ATG24/SNX4; the interaction is direct and plays a role in mitophagy (PubMed:35835849).</text>
</comment>
<comment type="subcellular location">
    <subcellularLocation>
        <location evidence="5">Mitochondrion inner membrane</location>
        <topology evidence="1">Peripheral membrane protein</topology>
        <orientation evidence="1">Intermembrane side</orientation>
    </subcellularLocation>
</comment>
<comment type="induction">
    <text evidence="2">Expressed in hyphae and conidiae, and highly induced during the necrotrophic stage of infection.</text>
</comment>
<comment type="disruption phenotype">
    <text evidence="2">Abrogates mitophagy (PubMed:35835849). Defective morphogenesis of mitochondrial cristae; cells are sensitive to menadione (generates reactive oxygen species in the mitochondrion) and the mitochondrial membrane potential is affected (PubMed:35835849). Decreases formation of secondary hyphae; double knockout with PHB2 exacerbates the effect (PubMed:35835849). Decreases virulence on A.thaliana (PubMed:35835849). No vegetative growth or conidiation phenotype (PubMed:35835849).</text>
</comment>
<comment type="similarity">
    <text evidence="4">Belongs to the prohibitin family.</text>
</comment>